<sequence length="89" mass="10540">MAKKSKIAKERKREELVNKYYELRKELKAKGDYEALRKLPRDSSPTRLTRRCKVTGRPRGVLRKFEMSRIAFREHAHKGQIPGVKKSSW</sequence>
<keyword id="KW-0687">Ribonucleoprotein</keyword>
<keyword id="KW-0689">Ribosomal protein</keyword>
<keyword id="KW-0694">RNA-binding</keyword>
<keyword id="KW-0699">rRNA-binding</keyword>
<name>RS14_STAAM</name>
<organism>
    <name type="scientific">Staphylococcus aureus (strain Mu50 / ATCC 700699)</name>
    <dbReference type="NCBI Taxonomy" id="158878"/>
    <lineage>
        <taxon>Bacteria</taxon>
        <taxon>Bacillati</taxon>
        <taxon>Bacillota</taxon>
        <taxon>Bacilli</taxon>
        <taxon>Bacillales</taxon>
        <taxon>Staphylococcaceae</taxon>
        <taxon>Staphylococcus</taxon>
    </lineage>
</organism>
<protein>
    <recommendedName>
        <fullName evidence="1">Small ribosomal subunit protein uS14A</fullName>
    </recommendedName>
    <alternativeName>
        <fullName evidence="2">30S ribosomal protein S14</fullName>
    </alternativeName>
</protein>
<feature type="chain" id="PRO_0000130933" description="Small ribosomal subunit protein uS14A">
    <location>
        <begin position="1"/>
        <end position="89"/>
    </location>
</feature>
<dbReference type="EMBL" id="BA000017">
    <property type="protein sequence ID" value="BAB57498.1"/>
    <property type="molecule type" value="Genomic_DNA"/>
</dbReference>
<dbReference type="RefSeq" id="WP_001085655.1">
    <property type="nucleotide sequence ID" value="NC_002758.2"/>
</dbReference>
<dbReference type="SMR" id="P66414"/>
<dbReference type="GeneID" id="98345705"/>
<dbReference type="KEGG" id="sav:SAV1336"/>
<dbReference type="HOGENOM" id="CLU_139869_0_0_9"/>
<dbReference type="PhylomeDB" id="P66414"/>
<dbReference type="Proteomes" id="UP000002481">
    <property type="component" value="Chromosome"/>
</dbReference>
<dbReference type="GO" id="GO:0005737">
    <property type="term" value="C:cytoplasm"/>
    <property type="evidence" value="ECO:0007669"/>
    <property type="project" value="UniProtKB-ARBA"/>
</dbReference>
<dbReference type="GO" id="GO:0015935">
    <property type="term" value="C:small ribosomal subunit"/>
    <property type="evidence" value="ECO:0007669"/>
    <property type="project" value="TreeGrafter"/>
</dbReference>
<dbReference type="GO" id="GO:0019843">
    <property type="term" value="F:rRNA binding"/>
    <property type="evidence" value="ECO:0007669"/>
    <property type="project" value="UniProtKB-UniRule"/>
</dbReference>
<dbReference type="GO" id="GO:0003735">
    <property type="term" value="F:structural constituent of ribosome"/>
    <property type="evidence" value="ECO:0007669"/>
    <property type="project" value="InterPro"/>
</dbReference>
<dbReference type="GO" id="GO:0006412">
    <property type="term" value="P:translation"/>
    <property type="evidence" value="ECO:0007669"/>
    <property type="project" value="UniProtKB-UniRule"/>
</dbReference>
<dbReference type="FunFam" id="4.10.830.10:FF:000003">
    <property type="entry name" value="30S ribosomal protein S14"/>
    <property type="match status" value="1"/>
</dbReference>
<dbReference type="Gene3D" id="4.10.830.10">
    <property type="entry name" value="30s Ribosomal Protein S14, Chain N"/>
    <property type="match status" value="1"/>
</dbReference>
<dbReference type="HAMAP" id="MF_00537">
    <property type="entry name" value="Ribosomal_uS14_1"/>
    <property type="match status" value="1"/>
</dbReference>
<dbReference type="InterPro" id="IPR001209">
    <property type="entry name" value="Ribosomal_uS14"/>
</dbReference>
<dbReference type="InterPro" id="IPR023036">
    <property type="entry name" value="Ribosomal_uS14_bac/plastid"/>
</dbReference>
<dbReference type="InterPro" id="IPR018271">
    <property type="entry name" value="Ribosomal_uS14_CS"/>
</dbReference>
<dbReference type="InterPro" id="IPR043140">
    <property type="entry name" value="Ribosomal_uS14_sf"/>
</dbReference>
<dbReference type="NCBIfam" id="NF006477">
    <property type="entry name" value="PRK08881.1"/>
    <property type="match status" value="1"/>
</dbReference>
<dbReference type="PANTHER" id="PTHR19836">
    <property type="entry name" value="30S RIBOSOMAL PROTEIN S14"/>
    <property type="match status" value="1"/>
</dbReference>
<dbReference type="PANTHER" id="PTHR19836:SF19">
    <property type="entry name" value="SMALL RIBOSOMAL SUBUNIT PROTEIN US14M"/>
    <property type="match status" value="1"/>
</dbReference>
<dbReference type="Pfam" id="PF00253">
    <property type="entry name" value="Ribosomal_S14"/>
    <property type="match status" value="1"/>
</dbReference>
<dbReference type="SUPFAM" id="SSF57716">
    <property type="entry name" value="Glucocorticoid receptor-like (DNA-binding domain)"/>
    <property type="match status" value="1"/>
</dbReference>
<dbReference type="PROSITE" id="PS00527">
    <property type="entry name" value="RIBOSOMAL_S14"/>
    <property type="match status" value="1"/>
</dbReference>
<reference key="1">
    <citation type="journal article" date="2001" name="Lancet">
        <title>Whole genome sequencing of meticillin-resistant Staphylococcus aureus.</title>
        <authorList>
            <person name="Kuroda M."/>
            <person name="Ohta T."/>
            <person name="Uchiyama I."/>
            <person name="Baba T."/>
            <person name="Yuzawa H."/>
            <person name="Kobayashi I."/>
            <person name="Cui L."/>
            <person name="Oguchi A."/>
            <person name="Aoki K."/>
            <person name="Nagai Y."/>
            <person name="Lian J.-Q."/>
            <person name="Ito T."/>
            <person name="Kanamori M."/>
            <person name="Matsumaru H."/>
            <person name="Maruyama A."/>
            <person name="Murakami H."/>
            <person name="Hosoyama A."/>
            <person name="Mizutani-Ui Y."/>
            <person name="Takahashi N.K."/>
            <person name="Sawano T."/>
            <person name="Inoue R."/>
            <person name="Kaito C."/>
            <person name="Sekimizu K."/>
            <person name="Hirakawa H."/>
            <person name="Kuhara S."/>
            <person name="Goto S."/>
            <person name="Yabuzaki J."/>
            <person name="Kanehisa M."/>
            <person name="Yamashita A."/>
            <person name="Oshima K."/>
            <person name="Furuya K."/>
            <person name="Yoshino C."/>
            <person name="Shiba T."/>
            <person name="Hattori M."/>
            <person name="Ogasawara N."/>
            <person name="Hayashi H."/>
            <person name="Hiramatsu K."/>
        </authorList>
    </citation>
    <scope>NUCLEOTIDE SEQUENCE [LARGE SCALE GENOMIC DNA]</scope>
    <source>
        <strain>Mu50 / ATCC 700699</strain>
    </source>
</reference>
<gene>
    <name evidence="1" type="primary">rpsN</name>
    <name type="synonym">rpsN2</name>
    <name type="ordered locus">SAV1336</name>
</gene>
<comment type="function">
    <text evidence="1">Binds 16S rRNA, required for the assembly of 30S particles and may also be responsible for determining the conformation of the 16S rRNA at the A site.</text>
</comment>
<comment type="subunit">
    <text evidence="1">Part of the 30S ribosomal subunit. Contacts proteins S3 and S10.</text>
</comment>
<comment type="similarity">
    <text evidence="1">Belongs to the universal ribosomal protein uS14 family.</text>
</comment>
<proteinExistence type="inferred from homology"/>
<evidence type="ECO:0000255" key="1">
    <source>
        <dbReference type="HAMAP-Rule" id="MF_00537"/>
    </source>
</evidence>
<evidence type="ECO:0000305" key="2"/>
<accession>P66414</accession>
<accession>Q99UE0</accession>